<name>ATP8_MICPE</name>
<keyword id="KW-0007">Acetylation</keyword>
<keyword id="KW-0066">ATP synthesis</keyword>
<keyword id="KW-0138">CF(0)</keyword>
<keyword id="KW-0375">Hydrogen ion transport</keyword>
<keyword id="KW-0406">Ion transport</keyword>
<keyword id="KW-0472">Membrane</keyword>
<keyword id="KW-0496">Mitochondrion</keyword>
<keyword id="KW-0812">Transmembrane</keyword>
<keyword id="KW-1133">Transmembrane helix</keyword>
<keyword id="KW-0813">Transport</keyword>
<accession>P24949</accession>
<reference key="1">
    <citation type="journal article" date="1992" name="J. Mol. Evol.">
        <title>Three patterns of mitochondrial DNA nucleotide divergence in the meadow vole, Microtus pennsylvanicus.</title>
        <authorList>
            <person name="Pumo D.E."/>
            <person name="Phillips G.J."/>
            <person name="Barcia M."/>
            <person name="Millan C."/>
        </authorList>
    </citation>
    <scope>NUCLEOTIDE SEQUENCE [GENOMIC DNA]</scope>
</reference>
<gene>
    <name type="primary">MT-ATP8</name>
    <name type="synonym">ATP8</name>
    <name type="synonym">ATPASE8</name>
    <name type="synonym">MTATP8</name>
</gene>
<feature type="chain" id="PRO_0000195550" description="ATP synthase protein 8">
    <location>
        <begin position="1"/>
        <end position="67"/>
    </location>
</feature>
<feature type="transmembrane region" description="Helical" evidence="4">
    <location>
        <begin position="8"/>
        <end position="24"/>
    </location>
</feature>
<feature type="modified residue" description="N6-acetyllysine; alternate" evidence="3">
    <location>
        <position position="54"/>
    </location>
</feature>
<feature type="modified residue" description="N6-succinyllysine; alternate" evidence="3">
    <location>
        <position position="54"/>
    </location>
</feature>
<feature type="modified residue" description="N6-acetyllysine" evidence="3">
    <location>
        <position position="57"/>
    </location>
</feature>
<geneLocation type="mitochondrion"/>
<proteinExistence type="inferred from homology"/>
<evidence type="ECO:0000250" key="1"/>
<evidence type="ECO:0000250" key="2">
    <source>
        <dbReference type="UniProtKB" id="P03928"/>
    </source>
</evidence>
<evidence type="ECO:0000250" key="3">
    <source>
        <dbReference type="UniProtKB" id="P03930"/>
    </source>
</evidence>
<evidence type="ECO:0000255" key="4"/>
<evidence type="ECO:0000305" key="5"/>
<organism>
    <name type="scientific">Microtus pennsylvanicus</name>
    <name type="common">Meadow vole</name>
    <dbReference type="NCBI Taxonomy" id="10058"/>
    <lineage>
        <taxon>Eukaryota</taxon>
        <taxon>Metazoa</taxon>
        <taxon>Chordata</taxon>
        <taxon>Craniata</taxon>
        <taxon>Vertebrata</taxon>
        <taxon>Euteleostomi</taxon>
        <taxon>Mammalia</taxon>
        <taxon>Eutheria</taxon>
        <taxon>Euarchontoglires</taxon>
        <taxon>Glires</taxon>
        <taxon>Rodentia</taxon>
        <taxon>Myomorpha</taxon>
        <taxon>Muroidea</taxon>
        <taxon>Cricetidae</taxon>
        <taxon>Arvicolinae</taxon>
        <taxon>Microtus</taxon>
    </lineage>
</organism>
<sequence>MPQLDTSTWFTTVLSTTITLFILMQLKISLHNFPQTPSVKSIKYMKTDNPWESKWTKIYSPLSLPLQ</sequence>
<dbReference type="EMBL" id="X60285">
    <property type="protein sequence ID" value="CAA42826.1"/>
    <property type="molecule type" value="Genomic_DNA"/>
</dbReference>
<dbReference type="SMR" id="P24949"/>
<dbReference type="GO" id="GO:0031966">
    <property type="term" value="C:mitochondrial membrane"/>
    <property type="evidence" value="ECO:0007669"/>
    <property type="project" value="UniProtKB-SubCell"/>
</dbReference>
<dbReference type="GO" id="GO:0045259">
    <property type="term" value="C:proton-transporting ATP synthase complex"/>
    <property type="evidence" value="ECO:0007669"/>
    <property type="project" value="UniProtKB-KW"/>
</dbReference>
<dbReference type="GO" id="GO:0015078">
    <property type="term" value="F:proton transmembrane transporter activity"/>
    <property type="evidence" value="ECO:0007669"/>
    <property type="project" value="InterPro"/>
</dbReference>
<dbReference type="GO" id="GO:0015986">
    <property type="term" value="P:proton motive force-driven ATP synthesis"/>
    <property type="evidence" value="ECO:0007669"/>
    <property type="project" value="InterPro"/>
</dbReference>
<dbReference type="InterPro" id="IPR039017">
    <property type="entry name" value="ATP8_mammal"/>
</dbReference>
<dbReference type="InterPro" id="IPR001421">
    <property type="entry name" value="ATP8_metazoa"/>
</dbReference>
<dbReference type="PANTHER" id="PTHR13722">
    <property type="entry name" value="ATP SYNTHASE PROTEIN 8"/>
    <property type="match status" value="1"/>
</dbReference>
<dbReference type="PANTHER" id="PTHR13722:SF0">
    <property type="entry name" value="ATP SYNTHASE PROTEIN 8"/>
    <property type="match status" value="1"/>
</dbReference>
<dbReference type="Pfam" id="PF00895">
    <property type="entry name" value="ATP-synt_8"/>
    <property type="match status" value="1"/>
</dbReference>
<comment type="function">
    <text evidence="1">Mitochondrial membrane ATP synthase (F(1)F(0) ATP synthase or Complex V) produces ATP from ADP in the presence of a proton gradient across the membrane which is generated by electron transport complexes of the respiratory chain. F-type ATPases consist of two structural domains, F(1) - containing the extramembraneous catalytic core and F(0) - containing the membrane proton channel, linked together by a central stalk and a peripheral stalk. During catalysis, ATP synthesis in the catalytic domain of F(1) is coupled via a rotary mechanism of the central stalk subunits to proton translocation. Part of the complex F(0) domain. Minor subunit located with subunit a in the membrane (By similarity).</text>
</comment>
<comment type="subunit">
    <text evidence="2">F-type ATPases have 2 components, CF(1) - the catalytic core - and CF(0) - the membrane proton channel. Component of an ATP synthase complex composed of ATP5PB, ATP5MC1, ATP5F1E, ATP5PD, ATP5ME, ATP5PF, ATP5MF, MT-ATP6, MT-ATP8, ATP5F1A, ATP5F1B, ATP5F1D, ATP5F1C, ATP5PO, ATP5MG, ATP5MK and ATP5MJ (By similarity). Interacts with PRICKLE3 (By similarity).</text>
</comment>
<comment type="subcellular location">
    <subcellularLocation>
        <location>Mitochondrion membrane</location>
        <topology>Single-pass membrane protein</topology>
    </subcellularLocation>
</comment>
<comment type="similarity">
    <text evidence="5">Belongs to the ATPase protein 8 family.</text>
</comment>
<protein>
    <recommendedName>
        <fullName>ATP synthase protein 8</fullName>
    </recommendedName>
    <alternativeName>
        <fullName>A6L</fullName>
    </alternativeName>
    <alternativeName>
        <fullName>F-ATPase subunit 8</fullName>
    </alternativeName>
</protein>